<gene>
    <name evidence="1" type="primary">groES</name>
    <name evidence="1" type="synonym">groS</name>
    <name type="ordered locus">RHA1_ro06189</name>
</gene>
<comment type="function">
    <text evidence="1">Together with the chaperonin GroEL, plays an essential role in assisting protein folding. The GroEL-GroES system forms a nano-cage that allows encapsulation of the non-native substrate proteins and provides a physical environment optimized to promote and accelerate protein folding. GroES binds to the apical surface of the GroEL ring, thereby capping the opening of the GroEL channel.</text>
</comment>
<comment type="subunit">
    <text evidence="1">Heptamer of 7 subunits arranged in a ring. Interacts with the chaperonin GroEL.</text>
</comment>
<comment type="subcellular location">
    <subcellularLocation>
        <location evidence="1">Cytoplasm</location>
    </subcellularLocation>
</comment>
<comment type="similarity">
    <text evidence="1">Belongs to the GroES chaperonin family.</text>
</comment>
<name>CH10_RHOJR</name>
<dbReference type="EMBL" id="CP000431">
    <property type="protein sequence ID" value="ABG97966.1"/>
    <property type="molecule type" value="Genomic_DNA"/>
</dbReference>
<dbReference type="RefSeq" id="WP_003940763.1">
    <property type="nucleotide sequence ID" value="NC_008268.1"/>
</dbReference>
<dbReference type="SMR" id="Q0S3C0"/>
<dbReference type="GeneID" id="93803243"/>
<dbReference type="KEGG" id="rha:RHA1_ro06189"/>
<dbReference type="eggNOG" id="COG0234">
    <property type="taxonomic scope" value="Bacteria"/>
</dbReference>
<dbReference type="HOGENOM" id="CLU_132825_2_0_11"/>
<dbReference type="OrthoDB" id="9806791at2"/>
<dbReference type="Proteomes" id="UP000008710">
    <property type="component" value="Chromosome"/>
</dbReference>
<dbReference type="GO" id="GO:0005737">
    <property type="term" value="C:cytoplasm"/>
    <property type="evidence" value="ECO:0007669"/>
    <property type="project" value="UniProtKB-SubCell"/>
</dbReference>
<dbReference type="GO" id="GO:0005524">
    <property type="term" value="F:ATP binding"/>
    <property type="evidence" value="ECO:0007669"/>
    <property type="project" value="InterPro"/>
</dbReference>
<dbReference type="GO" id="GO:0046872">
    <property type="term" value="F:metal ion binding"/>
    <property type="evidence" value="ECO:0007669"/>
    <property type="project" value="TreeGrafter"/>
</dbReference>
<dbReference type="GO" id="GO:0044183">
    <property type="term" value="F:protein folding chaperone"/>
    <property type="evidence" value="ECO:0007669"/>
    <property type="project" value="InterPro"/>
</dbReference>
<dbReference type="GO" id="GO:0051087">
    <property type="term" value="F:protein-folding chaperone binding"/>
    <property type="evidence" value="ECO:0007669"/>
    <property type="project" value="TreeGrafter"/>
</dbReference>
<dbReference type="GO" id="GO:0051082">
    <property type="term" value="F:unfolded protein binding"/>
    <property type="evidence" value="ECO:0007669"/>
    <property type="project" value="TreeGrafter"/>
</dbReference>
<dbReference type="GO" id="GO:0051085">
    <property type="term" value="P:chaperone cofactor-dependent protein refolding"/>
    <property type="evidence" value="ECO:0007669"/>
    <property type="project" value="TreeGrafter"/>
</dbReference>
<dbReference type="CDD" id="cd00320">
    <property type="entry name" value="cpn10"/>
    <property type="match status" value="1"/>
</dbReference>
<dbReference type="FunFam" id="2.30.33.40:FF:000001">
    <property type="entry name" value="10 kDa chaperonin"/>
    <property type="match status" value="1"/>
</dbReference>
<dbReference type="Gene3D" id="2.30.33.40">
    <property type="entry name" value="GroES chaperonin"/>
    <property type="match status" value="1"/>
</dbReference>
<dbReference type="HAMAP" id="MF_00580">
    <property type="entry name" value="CH10"/>
    <property type="match status" value="1"/>
</dbReference>
<dbReference type="InterPro" id="IPR020818">
    <property type="entry name" value="Chaperonin_GroES"/>
</dbReference>
<dbReference type="InterPro" id="IPR037124">
    <property type="entry name" value="Chaperonin_GroES_sf"/>
</dbReference>
<dbReference type="InterPro" id="IPR018369">
    <property type="entry name" value="Chaprnonin_Cpn10_CS"/>
</dbReference>
<dbReference type="InterPro" id="IPR011032">
    <property type="entry name" value="GroES-like_sf"/>
</dbReference>
<dbReference type="NCBIfam" id="NF001530">
    <property type="entry name" value="PRK00364.1-6"/>
    <property type="match status" value="1"/>
</dbReference>
<dbReference type="NCBIfam" id="NF001531">
    <property type="entry name" value="PRK00364.2-2"/>
    <property type="match status" value="1"/>
</dbReference>
<dbReference type="NCBIfam" id="NF001533">
    <property type="entry name" value="PRK00364.2-4"/>
    <property type="match status" value="1"/>
</dbReference>
<dbReference type="NCBIfam" id="NF001534">
    <property type="entry name" value="PRK00364.2-5"/>
    <property type="match status" value="1"/>
</dbReference>
<dbReference type="PANTHER" id="PTHR10772">
    <property type="entry name" value="10 KDA HEAT SHOCK PROTEIN"/>
    <property type="match status" value="1"/>
</dbReference>
<dbReference type="PANTHER" id="PTHR10772:SF58">
    <property type="entry name" value="CO-CHAPERONIN GROES"/>
    <property type="match status" value="1"/>
</dbReference>
<dbReference type="Pfam" id="PF00166">
    <property type="entry name" value="Cpn10"/>
    <property type="match status" value="1"/>
</dbReference>
<dbReference type="PRINTS" id="PR00297">
    <property type="entry name" value="CHAPERONIN10"/>
</dbReference>
<dbReference type="SMART" id="SM00883">
    <property type="entry name" value="Cpn10"/>
    <property type="match status" value="1"/>
</dbReference>
<dbReference type="SUPFAM" id="SSF50129">
    <property type="entry name" value="GroES-like"/>
    <property type="match status" value="1"/>
</dbReference>
<dbReference type="PROSITE" id="PS00681">
    <property type="entry name" value="CHAPERONINS_CPN10"/>
    <property type="match status" value="1"/>
</dbReference>
<sequence>MASVNIKPLEDKILVQANEAETTTASGLVIPDTAKEKPQEGTVVAVGEGRVNEQGNRIPVDVKEGDTVIYSKYGGTEIKYAGQEYLILSARDVLAVVSK</sequence>
<organism>
    <name type="scientific">Rhodococcus jostii (strain RHA1)</name>
    <dbReference type="NCBI Taxonomy" id="101510"/>
    <lineage>
        <taxon>Bacteria</taxon>
        <taxon>Bacillati</taxon>
        <taxon>Actinomycetota</taxon>
        <taxon>Actinomycetes</taxon>
        <taxon>Mycobacteriales</taxon>
        <taxon>Nocardiaceae</taxon>
        <taxon>Rhodococcus</taxon>
    </lineage>
</organism>
<evidence type="ECO:0000255" key="1">
    <source>
        <dbReference type="HAMAP-Rule" id="MF_00580"/>
    </source>
</evidence>
<feature type="chain" id="PRO_1000025351" description="Co-chaperonin GroES">
    <location>
        <begin position="1"/>
        <end position="99"/>
    </location>
</feature>
<protein>
    <recommendedName>
        <fullName evidence="1">Co-chaperonin GroES</fullName>
    </recommendedName>
    <alternativeName>
        <fullName evidence="1">10 kDa chaperonin</fullName>
    </alternativeName>
    <alternativeName>
        <fullName evidence="1">Chaperonin-10</fullName>
        <shortName evidence="1">Cpn10</shortName>
    </alternativeName>
</protein>
<keyword id="KW-0143">Chaperone</keyword>
<keyword id="KW-0963">Cytoplasm</keyword>
<reference key="1">
    <citation type="journal article" date="2006" name="Proc. Natl. Acad. Sci. U.S.A.">
        <title>The complete genome of Rhodococcus sp. RHA1 provides insights into a catabolic powerhouse.</title>
        <authorList>
            <person name="McLeod M.P."/>
            <person name="Warren R.L."/>
            <person name="Hsiao W.W.L."/>
            <person name="Araki N."/>
            <person name="Myhre M."/>
            <person name="Fernandes C."/>
            <person name="Miyazawa D."/>
            <person name="Wong W."/>
            <person name="Lillquist A.L."/>
            <person name="Wang D."/>
            <person name="Dosanjh M."/>
            <person name="Hara H."/>
            <person name="Petrescu A."/>
            <person name="Morin R.D."/>
            <person name="Yang G."/>
            <person name="Stott J.M."/>
            <person name="Schein J.E."/>
            <person name="Shin H."/>
            <person name="Smailus D."/>
            <person name="Siddiqui A.S."/>
            <person name="Marra M.A."/>
            <person name="Jones S.J.M."/>
            <person name="Holt R."/>
            <person name="Brinkman F.S.L."/>
            <person name="Miyauchi K."/>
            <person name="Fukuda M."/>
            <person name="Davies J.E."/>
            <person name="Mohn W.W."/>
            <person name="Eltis L.D."/>
        </authorList>
    </citation>
    <scope>NUCLEOTIDE SEQUENCE [LARGE SCALE GENOMIC DNA]</scope>
    <source>
        <strain>RHA1</strain>
    </source>
</reference>
<accession>Q0S3C0</accession>
<proteinExistence type="inferred from homology"/>